<feature type="chain" id="PRO_0000063415" description="Chaperonin GroEL">
    <location>
        <begin position="1"/>
        <end position="547"/>
    </location>
</feature>
<feature type="binding site" evidence="1">
    <location>
        <begin position="30"/>
        <end position="33"/>
    </location>
    <ligand>
        <name>ATP</name>
        <dbReference type="ChEBI" id="CHEBI:30616"/>
    </ligand>
</feature>
<feature type="binding site" evidence="1">
    <location>
        <position position="51"/>
    </location>
    <ligand>
        <name>ATP</name>
        <dbReference type="ChEBI" id="CHEBI:30616"/>
    </ligand>
</feature>
<feature type="binding site" evidence="1">
    <location>
        <begin position="87"/>
        <end position="91"/>
    </location>
    <ligand>
        <name>ATP</name>
        <dbReference type="ChEBI" id="CHEBI:30616"/>
    </ligand>
</feature>
<feature type="binding site" evidence="1">
    <location>
        <position position="415"/>
    </location>
    <ligand>
        <name>ATP</name>
        <dbReference type="ChEBI" id="CHEBI:30616"/>
    </ligand>
</feature>
<feature type="binding site" evidence="1">
    <location>
        <position position="496"/>
    </location>
    <ligand>
        <name>ATP</name>
        <dbReference type="ChEBI" id="CHEBI:30616"/>
    </ligand>
</feature>
<proteinExistence type="inferred from homology"/>
<sequence length="547" mass="57306">MAAKDVKFGNDARVKMLAGVNVLADAVKVTLGPKGRNVVLDKSFGAPTITKDGVSVAREIELEDKFENMGAQMVKEVASKANDAAGDGTTTATVLAQAIVNEGLKAVAAGMNPMDLKRGIDKAVAAVVTELKALSKPCETSKEIEQVGTISANSDSIVGQLIAQAMEKVGKEGVITVEDGTGLEDELDVVEGMQFDRGYLSPYFINKPETATVELDSPFILLVDKKISNIRELLPVLEAVAKAGKPLLIIAEDVEGEALATLVVNTMRGIVKVAAVKAPGFGDRRKAMLQDIAILTAGTVISEEIGMELEKATLEDLGQAKRVVINKDNTTIIDGIGDEAQIKGRVAQIRQQIEESTSDYDKEKLQERVAKLAGGVAVIKVGAATEVEMKEKKDRVEDALHATRAAVEEGIVAGGGVALIRAASKAAASLQGDNEEQNVGIKLALRAMESPLRQIVANAGEEASVVASAVKNGEGNFGYNAGTEQYGDMIAMGILDPTKVTRSALQFAASIAGLMITTEAMVTELPKDDKLDAAAAMGGMGGMGGMM</sequence>
<comment type="function">
    <text evidence="1">Together with its co-chaperonin GroES, plays an essential role in assisting protein folding. The GroEL-GroES system forms a nano-cage that allows encapsulation of the non-native substrate proteins and provides a physical environment optimized to promote and accelerate protein folding.</text>
</comment>
<comment type="catalytic activity">
    <reaction evidence="1">
        <text>ATP + H2O + a folded polypeptide = ADP + phosphate + an unfolded polypeptide.</text>
        <dbReference type="EC" id="5.6.1.7"/>
    </reaction>
</comment>
<comment type="subunit">
    <text evidence="1">Forms a cylinder of 14 subunits composed of two heptameric rings stacked back-to-back. Interacts with the co-chaperonin GroES.</text>
</comment>
<comment type="subcellular location">
    <subcellularLocation>
        <location evidence="1">Cytoplasm</location>
    </subcellularLocation>
</comment>
<comment type="similarity">
    <text evidence="1">Belongs to the chaperonin (HSP60) family.</text>
</comment>
<gene>
    <name evidence="1" type="primary">groEL</name>
    <name evidence="1" type="synonym">groL</name>
    <name type="ordered locus">MS0459</name>
</gene>
<reference key="1">
    <citation type="journal article" date="2004" name="Nat. Biotechnol.">
        <title>The genome sequence of the capnophilic rumen bacterium Mannheimia succiniciproducens.</title>
        <authorList>
            <person name="Hong S.H."/>
            <person name="Kim J.S."/>
            <person name="Lee S.Y."/>
            <person name="In Y.H."/>
            <person name="Choi S.S."/>
            <person name="Rih J.-K."/>
            <person name="Kim C.H."/>
            <person name="Jeong H."/>
            <person name="Hur C.G."/>
            <person name="Kim J.J."/>
        </authorList>
    </citation>
    <scope>NUCLEOTIDE SEQUENCE [LARGE SCALE GENOMIC DNA]</scope>
    <source>
        <strain>KCTC 0769BP / MBEL55E</strain>
    </source>
</reference>
<evidence type="ECO:0000255" key="1">
    <source>
        <dbReference type="HAMAP-Rule" id="MF_00600"/>
    </source>
</evidence>
<accession>Q65VE4</accession>
<organism>
    <name type="scientific">Mannheimia succiniciproducens (strain KCTC 0769BP / MBEL55E)</name>
    <dbReference type="NCBI Taxonomy" id="221988"/>
    <lineage>
        <taxon>Bacteria</taxon>
        <taxon>Pseudomonadati</taxon>
        <taxon>Pseudomonadota</taxon>
        <taxon>Gammaproteobacteria</taxon>
        <taxon>Pasteurellales</taxon>
        <taxon>Pasteurellaceae</taxon>
        <taxon>Basfia</taxon>
    </lineage>
</organism>
<dbReference type="EC" id="5.6.1.7" evidence="1"/>
<dbReference type="EMBL" id="AE016827">
    <property type="protein sequence ID" value="AAU37066.1"/>
    <property type="molecule type" value="Genomic_DNA"/>
</dbReference>
<dbReference type="RefSeq" id="WP_011199641.1">
    <property type="nucleotide sequence ID" value="NC_006300.1"/>
</dbReference>
<dbReference type="SMR" id="Q65VE4"/>
<dbReference type="STRING" id="221988.MS0459"/>
<dbReference type="KEGG" id="msu:MS0459"/>
<dbReference type="eggNOG" id="COG0459">
    <property type="taxonomic scope" value="Bacteria"/>
</dbReference>
<dbReference type="HOGENOM" id="CLU_016503_3_0_6"/>
<dbReference type="OrthoDB" id="9766614at2"/>
<dbReference type="Proteomes" id="UP000000607">
    <property type="component" value="Chromosome"/>
</dbReference>
<dbReference type="GO" id="GO:0005737">
    <property type="term" value="C:cytoplasm"/>
    <property type="evidence" value="ECO:0007669"/>
    <property type="project" value="UniProtKB-SubCell"/>
</dbReference>
<dbReference type="GO" id="GO:0005524">
    <property type="term" value="F:ATP binding"/>
    <property type="evidence" value="ECO:0007669"/>
    <property type="project" value="UniProtKB-UniRule"/>
</dbReference>
<dbReference type="GO" id="GO:0140662">
    <property type="term" value="F:ATP-dependent protein folding chaperone"/>
    <property type="evidence" value="ECO:0007669"/>
    <property type="project" value="InterPro"/>
</dbReference>
<dbReference type="GO" id="GO:0016853">
    <property type="term" value="F:isomerase activity"/>
    <property type="evidence" value="ECO:0007669"/>
    <property type="project" value="UniProtKB-KW"/>
</dbReference>
<dbReference type="GO" id="GO:0051082">
    <property type="term" value="F:unfolded protein binding"/>
    <property type="evidence" value="ECO:0007669"/>
    <property type="project" value="UniProtKB-UniRule"/>
</dbReference>
<dbReference type="GO" id="GO:0042026">
    <property type="term" value="P:protein refolding"/>
    <property type="evidence" value="ECO:0007669"/>
    <property type="project" value="UniProtKB-UniRule"/>
</dbReference>
<dbReference type="CDD" id="cd03344">
    <property type="entry name" value="GroEL"/>
    <property type="match status" value="1"/>
</dbReference>
<dbReference type="FunFam" id="1.10.560.10:FF:000001">
    <property type="entry name" value="60 kDa chaperonin"/>
    <property type="match status" value="1"/>
</dbReference>
<dbReference type="FunFam" id="3.50.7.10:FF:000001">
    <property type="entry name" value="60 kDa chaperonin"/>
    <property type="match status" value="1"/>
</dbReference>
<dbReference type="Gene3D" id="3.50.7.10">
    <property type="entry name" value="GroEL"/>
    <property type="match status" value="1"/>
</dbReference>
<dbReference type="Gene3D" id="1.10.560.10">
    <property type="entry name" value="GroEL-like equatorial domain"/>
    <property type="match status" value="1"/>
</dbReference>
<dbReference type="Gene3D" id="3.30.260.10">
    <property type="entry name" value="TCP-1-like chaperonin intermediate domain"/>
    <property type="match status" value="1"/>
</dbReference>
<dbReference type="HAMAP" id="MF_00600">
    <property type="entry name" value="CH60"/>
    <property type="match status" value="1"/>
</dbReference>
<dbReference type="InterPro" id="IPR018370">
    <property type="entry name" value="Chaperonin_Cpn60_CS"/>
</dbReference>
<dbReference type="InterPro" id="IPR001844">
    <property type="entry name" value="Cpn60/GroEL"/>
</dbReference>
<dbReference type="InterPro" id="IPR002423">
    <property type="entry name" value="Cpn60/GroEL/TCP-1"/>
</dbReference>
<dbReference type="InterPro" id="IPR027409">
    <property type="entry name" value="GroEL-like_apical_dom_sf"/>
</dbReference>
<dbReference type="InterPro" id="IPR027413">
    <property type="entry name" value="GROEL-like_equatorial_sf"/>
</dbReference>
<dbReference type="InterPro" id="IPR027410">
    <property type="entry name" value="TCP-1-like_intermed_sf"/>
</dbReference>
<dbReference type="NCBIfam" id="TIGR02348">
    <property type="entry name" value="GroEL"/>
    <property type="match status" value="1"/>
</dbReference>
<dbReference type="NCBIfam" id="NF000592">
    <property type="entry name" value="PRK00013.1"/>
    <property type="match status" value="1"/>
</dbReference>
<dbReference type="NCBIfam" id="NF009487">
    <property type="entry name" value="PRK12849.1"/>
    <property type="match status" value="1"/>
</dbReference>
<dbReference type="NCBIfam" id="NF009488">
    <property type="entry name" value="PRK12850.1"/>
    <property type="match status" value="1"/>
</dbReference>
<dbReference type="NCBIfam" id="NF009489">
    <property type="entry name" value="PRK12851.1"/>
    <property type="match status" value="1"/>
</dbReference>
<dbReference type="PANTHER" id="PTHR45633">
    <property type="entry name" value="60 KDA HEAT SHOCK PROTEIN, MITOCHONDRIAL"/>
    <property type="match status" value="1"/>
</dbReference>
<dbReference type="Pfam" id="PF00118">
    <property type="entry name" value="Cpn60_TCP1"/>
    <property type="match status" value="1"/>
</dbReference>
<dbReference type="PRINTS" id="PR00298">
    <property type="entry name" value="CHAPERONIN60"/>
</dbReference>
<dbReference type="SUPFAM" id="SSF52029">
    <property type="entry name" value="GroEL apical domain-like"/>
    <property type="match status" value="1"/>
</dbReference>
<dbReference type="SUPFAM" id="SSF48592">
    <property type="entry name" value="GroEL equatorial domain-like"/>
    <property type="match status" value="1"/>
</dbReference>
<dbReference type="SUPFAM" id="SSF54849">
    <property type="entry name" value="GroEL-intermediate domain like"/>
    <property type="match status" value="1"/>
</dbReference>
<dbReference type="PROSITE" id="PS00296">
    <property type="entry name" value="CHAPERONINS_CPN60"/>
    <property type="match status" value="1"/>
</dbReference>
<protein>
    <recommendedName>
        <fullName evidence="1">Chaperonin GroEL</fullName>
        <ecNumber evidence="1">5.6.1.7</ecNumber>
    </recommendedName>
    <alternativeName>
        <fullName evidence="1">60 kDa chaperonin</fullName>
    </alternativeName>
    <alternativeName>
        <fullName evidence="1">Chaperonin-60</fullName>
        <shortName evidence="1">Cpn60</shortName>
    </alternativeName>
</protein>
<name>CH60_MANSM</name>
<keyword id="KW-0067">ATP-binding</keyword>
<keyword id="KW-0143">Chaperone</keyword>
<keyword id="KW-0963">Cytoplasm</keyword>
<keyword id="KW-0413">Isomerase</keyword>
<keyword id="KW-0547">Nucleotide-binding</keyword>